<accession>P24661</accession>
<feature type="chain" id="PRO_0000105855" description="Bowman-Birk type proteinase inhibitor">
    <location>
        <begin position="1"/>
        <end position="63"/>
    </location>
</feature>
<feature type="site" description="Reactive bond for trypsin">
    <location>
        <begin position="16"/>
        <end position="17"/>
    </location>
</feature>
<feature type="site" description="Reactive bond for chymotrypsin">
    <location>
        <begin position="42"/>
        <end position="43"/>
    </location>
</feature>
<feature type="disulfide bond" evidence="1">
    <location>
        <begin position="8"/>
        <end position="61"/>
    </location>
</feature>
<feature type="disulfide bond" evidence="1">
    <location>
        <begin position="9"/>
        <end position="24"/>
    </location>
</feature>
<feature type="disulfide bond" evidence="1">
    <location>
        <begin position="12"/>
        <end position="57"/>
    </location>
</feature>
<feature type="disulfide bond" evidence="1">
    <location>
        <begin position="14"/>
        <end position="22"/>
    </location>
</feature>
<feature type="disulfide bond" evidence="1">
    <location>
        <begin position="31"/>
        <end position="38"/>
    </location>
</feature>
<feature type="disulfide bond" evidence="1">
    <location>
        <begin position="35"/>
        <end position="50"/>
    </location>
</feature>
<feature type="disulfide bond" evidence="1">
    <location>
        <begin position="40"/>
        <end position="48"/>
    </location>
</feature>
<keyword id="KW-0903">Direct protein sequencing</keyword>
<keyword id="KW-1015">Disulfide bond</keyword>
<keyword id="KW-0646">Protease inhibitor</keyword>
<keyword id="KW-0722">Serine protease inhibitor</keyword>
<organism>
    <name type="scientific">Vicia faba</name>
    <name type="common">Broad bean</name>
    <name type="synonym">Faba vulgaris</name>
    <dbReference type="NCBI Taxonomy" id="3906"/>
    <lineage>
        <taxon>Eukaryota</taxon>
        <taxon>Viridiplantae</taxon>
        <taxon>Streptophyta</taxon>
        <taxon>Embryophyta</taxon>
        <taxon>Tracheophyta</taxon>
        <taxon>Spermatophyta</taxon>
        <taxon>Magnoliopsida</taxon>
        <taxon>eudicotyledons</taxon>
        <taxon>Gunneridae</taxon>
        <taxon>Pentapetalae</taxon>
        <taxon>rosids</taxon>
        <taxon>fabids</taxon>
        <taxon>Fabales</taxon>
        <taxon>Fabaceae</taxon>
        <taxon>Papilionoideae</taxon>
        <taxon>50 kb inversion clade</taxon>
        <taxon>NPAAA clade</taxon>
        <taxon>Hologalegina</taxon>
        <taxon>IRL clade</taxon>
        <taxon>Fabeae</taxon>
        <taxon>Vicia</taxon>
    </lineage>
</organism>
<protein>
    <recommendedName>
        <fullName>Bowman-Birk type proteinase inhibitor</fullName>
    </recommendedName>
    <alternativeName>
        <fullName>FBI</fullName>
    </alternativeName>
</protein>
<name>IBB_VICFA</name>
<reference key="1">
    <citation type="journal article" date="1991" name="J. Biochem.">
        <title>The amino acid sequence of a Bowman-Birk type proteinase inhibitor from faba beans (Vicia faba L.).</title>
        <authorList>
            <person name="Asao T."/>
            <person name="Imai F."/>
            <person name="Tsuji I."/>
            <person name="Tashiro M."/>
            <person name="Iwami K."/>
            <person name="Ibuki F."/>
        </authorList>
    </citation>
    <scope>PROTEIN SEQUENCE</scope>
    <source>
        <tissue>Seed</tissue>
    </source>
</reference>
<proteinExistence type="evidence at protein level"/>
<comment type="function">
    <text>This inhibitor has two domains, each with separate antiprotease activity. Inhibits bovine trypsin and chymotrypsin, in a molar ratio of 1:1. The trypsin inhibition of FBI is independent of chymotrypsin inhibition, but the chymotrypsin inhibition is not completely independent of trypsin inhibition.</text>
</comment>
<comment type="similarity">
    <text evidence="2">Belongs to the Bowman-Birk serine protease inhibitor family.</text>
</comment>
<dbReference type="PIR" id="JX0198">
    <property type="entry name" value="TIVF"/>
</dbReference>
<dbReference type="SMR" id="P24661"/>
<dbReference type="MEROPS" id="I12.009"/>
<dbReference type="GO" id="GO:0005576">
    <property type="term" value="C:extracellular region"/>
    <property type="evidence" value="ECO:0007669"/>
    <property type="project" value="InterPro"/>
</dbReference>
<dbReference type="GO" id="GO:0004867">
    <property type="term" value="F:serine-type endopeptidase inhibitor activity"/>
    <property type="evidence" value="ECO:0007669"/>
    <property type="project" value="UniProtKB-KW"/>
</dbReference>
<dbReference type="CDD" id="cd00023">
    <property type="entry name" value="BBI"/>
    <property type="match status" value="1"/>
</dbReference>
<dbReference type="FunFam" id="2.10.69.10:FF:000001">
    <property type="entry name" value="Bowman-Birk type proteinase inhibitor"/>
    <property type="match status" value="1"/>
</dbReference>
<dbReference type="Gene3D" id="2.10.69.10">
    <property type="entry name" value="Cysteine Protease (Bromelain) Inhibitor, subunit H"/>
    <property type="match status" value="1"/>
</dbReference>
<dbReference type="InterPro" id="IPR035995">
    <property type="entry name" value="Bowman-Birk_prot_inh"/>
</dbReference>
<dbReference type="InterPro" id="IPR000877">
    <property type="entry name" value="Prot_inh_BBI"/>
</dbReference>
<dbReference type="Pfam" id="PF00228">
    <property type="entry name" value="Bowman-Birk_leg"/>
    <property type="match status" value="2"/>
</dbReference>
<dbReference type="SMART" id="SM00269">
    <property type="entry name" value="BowB"/>
    <property type="match status" value="1"/>
</dbReference>
<dbReference type="SUPFAM" id="SSF57247">
    <property type="entry name" value="Bowman-Birk inhibitor, BBI"/>
    <property type="match status" value="1"/>
</dbReference>
<dbReference type="PROSITE" id="PS00281">
    <property type="entry name" value="BOWMAN_BIRK"/>
    <property type="match status" value="1"/>
</dbReference>
<evidence type="ECO:0000250" key="1">
    <source>
        <dbReference type="UniProtKB" id="P80321"/>
    </source>
</evidence>
<evidence type="ECO:0000305" key="2"/>
<sequence length="63" mass="6989">GDDVKSACCDTCLCTKSEPPTCRCVDVGERCHSACNSCVCRYSNPPKCQCFDTHKFCYKSCHN</sequence>